<keyword id="KW-1185">Reference proteome</keyword>
<keyword id="KW-0687">Ribonucleoprotein</keyword>
<keyword id="KW-0689">Ribosomal protein</keyword>
<proteinExistence type="inferred from homology"/>
<comment type="function">
    <text evidence="1">This protein is located at the 30S-50S ribosomal subunit interface and may play a role in the structure and function of the aminoacyl-tRNA binding site.</text>
</comment>
<comment type="similarity">
    <text evidence="1">Belongs to the bacterial ribosomal protein bL19 family.</text>
</comment>
<feature type="chain" id="PRO_0000252513" description="Large ribosomal subunit protein bL19">
    <location>
        <begin position="1"/>
        <end position="127"/>
    </location>
</feature>
<evidence type="ECO:0000255" key="1">
    <source>
        <dbReference type="HAMAP-Rule" id="MF_00402"/>
    </source>
</evidence>
<evidence type="ECO:0000305" key="2"/>
<organism>
    <name type="scientific">Jannaschia sp. (strain CCS1)</name>
    <dbReference type="NCBI Taxonomy" id="290400"/>
    <lineage>
        <taxon>Bacteria</taxon>
        <taxon>Pseudomonadati</taxon>
        <taxon>Pseudomonadota</taxon>
        <taxon>Alphaproteobacteria</taxon>
        <taxon>Rhodobacterales</taxon>
        <taxon>Roseobacteraceae</taxon>
        <taxon>Jannaschia</taxon>
    </lineage>
</organism>
<dbReference type="EMBL" id="CP000264">
    <property type="protein sequence ID" value="ABD53659.1"/>
    <property type="molecule type" value="Genomic_DNA"/>
</dbReference>
<dbReference type="RefSeq" id="WP_011453867.1">
    <property type="nucleotide sequence ID" value="NC_007802.1"/>
</dbReference>
<dbReference type="SMR" id="Q28UF3"/>
<dbReference type="STRING" id="290400.Jann_0742"/>
<dbReference type="KEGG" id="jan:Jann_0742"/>
<dbReference type="eggNOG" id="COG0335">
    <property type="taxonomic scope" value="Bacteria"/>
</dbReference>
<dbReference type="HOGENOM" id="CLU_103507_2_1_5"/>
<dbReference type="OrthoDB" id="9803541at2"/>
<dbReference type="Proteomes" id="UP000008326">
    <property type="component" value="Chromosome"/>
</dbReference>
<dbReference type="GO" id="GO:0022625">
    <property type="term" value="C:cytosolic large ribosomal subunit"/>
    <property type="evidence" value="ECO:0007669"/>
    <property type="project" value="TreeGrafter"/>
</dbReference>
<dbReference type="GO" id="GO:0003735">
    <property type="term" value="F:structural constituent of ribosome"/>
    <property type="evidence" value="ECO:0007669"/>
    <property type="project" value="InterPro"/>
</dbReference>
<dbReference type="GO" id="GO:0006412">
    <property type="term" value="P:translation"/>
    <property type="evidence" value="ECO:0007669"/>
    <property type="project" value="UniProtKB-UniRule"/>
</dbReference>
<dbReference type="FunFam" id="2.30.30.790:FF:000001">
    <property type="entry name" value="50S ribosomal protein L19"/>
    <property type="match status" value="1"/>
</dbReference>
<dbReference type="Gene3D" id="2.30.30.790">
    <property type="match status" value="1"/>
</dbReference>
<dbReference type="HAMAP" id="MF_00402">
    <property type="entry name" value="Ribosomal_bL19"/>
    <property type="match status" value="1"/>
</dbReference>
<dbReference type="InterPro" id="IPR001857">
    <property type="entry name" value="Ribosomal_bL19"/>
</dbReference>
<dbReference type="InterPro" id="IPR018257">
    <property type="entry name" value="Ribosomal_bL19_CS"/>
</dbReference>
<dbReference type="InterPro" id="IPR038657">
    <property type="entry name" value="Ribosomal_bL19_sf"/>
</dbReference>
<dbReference type="InterPro" id="IPR008991">
    <property type="entry name" value="Translation_prot_SH3-like_sf"/>
</dbReference>
<dbReference type="NCBIfam" id="TIGR01024">
    <property type="entry name" value="rplS_bact"/>
    <property type="match status" value="1"/>
</dbReference>
<dbReference type="PANTHER" id="PTHR15680:SF9">
    <property type="entry name" value="LARGE RIBOSOMAL SUBUNIT PROTEIN BL19M"/>
    <property type="match status" value="1"/>
</dbReference>
<dbReference type="PANTHER" id="PTHR15680">
    <property type="entry name" value="RIBOSOMAL PROTEIN L19"/>
    <property type="match status" value="1"/>
</dbReference>
<dbReference type="Pfam" id="PF01245">
    <property type="entry name" value="Ribosomal_L19"/>
    <property type="match status" value="1"/>
</dbReference>
<dbReference type="PIRSF" id="PIRSF002191">
    <property type="entry name" value="Ribosomal_L19"/>
    <property type="match status" value="1"/>
</dbReference>
<dbReference type="PRINTS" id="PR00061">
    <property type="entry name" value="RIBOSOMALL19"/>
</dbReference>
<dbReference type="SUPFAM" id="SSF50104">
    <property type="entry name" value="Translation proteins SH3-like domain"/>
    <property type="match status" value="1"/>
</dbReference>
<dbReference type="PROSITE" id="PS01015">
    <property type="entry name" value="RIBOSOMAL_L19"/>
    <property type="match status" value="1"/>
</dbReference>
<sequence length="127" mass="14266">MNLIAQLEAEQVEALAKDIPDFKAGDTVRVGFRVTEGTRTRVQNYEGVCIARKNGHGIAGSFTVRKISFGEGVERVFPLHSTNIDSITVIRRGRVRRAKLYYLRSRRGKSARIAEDTRYKPRKSASA</sequence>
<reference key="1">
    <citation type="submission" date="2006-02" db="EMBL/GenBank/DDBJ databases">
        <title>Complete sequence of chromosome of Jannaschia sp. CCS1.</title>
        <authorList>
            <consortium name="US DOE Joint Genome Institute"/>
            <person name="Copeland A."/>
            <person name="Lucas S."/>
            <person name="Lapidus A."/>
            <person name="Barry K."/>
            <person name="Detter J.C."/>
            <person name="Glavina del Rio T."/>
            <person name="Hammon N."/>
            <person name="Israni S."/>
            <person name="Pitluck S."/>
            <person name="Brettin T."/>
            <person name="Bruce D."/>
            <person name="Han C."/>
            <person name="Tapia R."/>
            <person name="Gilna P."/>
            <person name="Chertkov O."/>
            <person name="Saunders E."/>
            <person name="Schmutz J."/>
            <person name="Larimer F."/>
            <person name="Land M."/>
            <person name="Kyrpides N."/>
            <person name="Lykidis A."/>
            <person name="Moran M.A."/>
            <person name="Belas R."/>
            <person name="Ye W."/>
            <person name="Buchan A."/>
            <person name="Gonzalez J.M."/>
            <person name="Schell M.A."/>
            <person name="Richardson P."/>
        </authorList>
    </citation>
    <scope>NUCLEOTIDE SEQUENCE [LARGE SCALE GENOMIC DNA]</scope>
    <source>
        <strain>CCS1</strain>
    </source>
</reference>
<name>RL19_JANSC</name>
<accession>Q28UF3</accession>
<gene>
    <name evidence="1" type="primary">rplS</name>
    <name type="ordered locus">Jann_0742</name>
</gene>
<protein>
    <recommendedName>
        <fullName evidence="1">Large ribosomal subunit protein bL19</fullName>
    </recommendedName>
    <alternativeName>
        <fullName evidence="2">50S ribosomal protein L19</fullName>
    </alternativeName>
</protein>